<protein>
    <recommendedName>
        <fullName evidence="1">Co-chaperonin GroES</fullName>
    </recommendedName>
    <alternativeName>
        <fullName evidence="1">10 kDa chaperonin</fullName>
    </alternativeName>
    <alternativeName>
        <fullName evidence="1">Chaperonin-10</fullName>
        <shortName evidence="1">Cpn10</shortName>
    </alternativeName>
</protein>
<keyword id="KW-0143">Chaperone</keyword>
<keyword id="KW-0963">Cytoplasm</keyword>
<keyword id="KW-1185">Reference proteome</keyword>
<evidence type="ECO:0000255" key="1">
    <source>
        <dbReference type="HAMAP-Rule" id="MF_00580"/>
    </source>
</evidence>
<reference key="1">
    <citation type="submission" date="2003-03" db="EMBL/GenBank/DDBJ databases">
        <title>The complete genome sequence of Neisseria gonorrhoeae.</title>
        <authorList>
            <person name="Lewis L.A."/>
            <person name="Gillaspy A.F."/>
            <person name="McLaughlin R.E."/>
            <person name="Gipson M."/>
            <person name="Ducey T.F."/>
            <person name="Ownbey T."/>
            <person name="Hartman K."/>
            <person name="Nydick C."/>
            <person name="Carson M.B."/>
            <person name="Vaughn J."/>
            <person name="Thomson C."/>
            <person name="Song L."/>
            <person name="Lin S."/>
            <person name="Yuan X."/>
            <person name="Najar F."/>
            <person name="Zhan M."/>
            <person name="Ren Q."/>
            <person name="Zhu H."/>
            <person name="Qi S."/>
            <person name="Kenton S.M."/>
            <person name="Lai H."/>
            <person name="White J.D."/>
            <person name="Clifton S."/>
            <person name="Roe B.A."/>
            <person name="Dyer D.W."/>
        </authorList>
    </citation>
    <scope>NUCLEOTIDE SEQUENCE [LARGE SCALE GENOMIC DNA]</scope>
    <source>
        <strain>ATCC 700825 / FA 1090</strain>
    </source>
</reference>
<gene>
    <name evidence="1" type="primary">groES</name>
    <name evidence="1" type="synonym">groS</name>
    <name type="ordered locus">NGO_2094</name>
</gene>
<feature type="chain" id="PRO_1000025309" description="Co-chaperonin GroES">
    <location>
        <begin position="1"/>
        <end position="96"/>
    </location>
</feature>
<accession>Q5F542</accession>
<organism>
    <name type="scientific">Neisseria gonorrhoeae (strain ATCC 700825 / FA 1090)</name>
    <dbReference type="NCBI Taxonomy" id="242231"/>
    <lineage>
        <taxon>Bacteria</taxon>
        <taxon>Pseudomonadati</taxon>
        <taxon>Pseudomonadota</taxon>
        <taxon>Betaproteobacteria</taxon>
        <taxon>Neisseriales</taxon>
        <taxon>Neisseriaceae</taxon>
        <taxon>Neisseria</taxon>
    </lineage>
</organism>
<sequence length="96" mass="10287">MTIRPLHDRVVVKRLEAEEKTASGIVLPGAAAEKPDMGEVIAVGAGKIGKDGARRPLDVKAGDKIIFGKYSGQTVKADGEELLVMREEDIFGIVEK</sequence>
<dbReference type="EMBL" id="AE004969">
    <property type="protein sequence ID" value="AAW90695.1"/>
    <property type="molecule type" value="Genomic_DNA"/>
</dbReference>
<dbReference type="RefSeq" id="WP_003687059.1">
    <property type="nucleotide sequence ID" value="NC_002946.2"/>
</dbReference>
<dbReference type="RefSeq" id="YP_209107.1">
    <property type="nucleotide sequence ID" value="NC_002946.2"/>
</dbReference>
<dbReference type="SMR" id="Q5F542"/>
<dbReference type="STRING" id="242231.NGO_2094"/>
<dbReference type="KEGG" id="ngo:NGO_2094"/>
<dbReference type="PATRIC" id="fig|242231.10.peg.2534"/>
<dbReference type="HOGENOM" id="CLU_132825_2_0_4"/>
<dbReference type="Proteomes" id="UP000000535">
    <property type="component" value="Chromosome"/>
</dbReference>
<dbReference type="GO" id="GO:0005737">
    <property type="term" value="C:cytoplasm"/>
    <property type="evidence" value="ECO:0007669"/>
    <property type="project" value="UniProtKB-SubCell"/>
</dbReference>
<dbReference type="GO" id="GO:0005524">
    <property type="term" value="F:ATP binding"/>
    <property type="evidence" value="ECO:0007669"/>
    <property type="project" value="InterPro"/>
</dbReference>
<dbReference type="GO" id="GO:0046872">
    <property type="term" value="F:metal ion binding"/>
    <property type="evidence" value="ECO:0007669"/>
    <property type="project" value="TreeGrafter"/>
</dbReference>
<dbReference type="GO" id="GO:0044183">
    <property type="term" value="F:protein folding chaperone"/>
    <property type="evidence" value="ECO:0007669"/>
    <property type="project" value="InterPro"/>
</dbReference>
<dbReference type="GO" id="GO:0051087">
    <property type="term" value="F:protein-folding chaperone binding"/>
    <property type="evidence" value="ECO:0007669"/>
    <property type="project" value="TreeGrafter"/>
</dbReference>
<dbReference type="GO" id="GO:0051082">
    <property type="term" value="F:unfolded protein binding"/>
    <property type="evidence" value="ECO:0007669"/>
    <property type="project" value="TreeGrafter"/>
</dbReference>
<dbReference type="GO" id="GO:0051085">
    <property type="term" value="P:chaperone cofactor-dependent protein refolding"/>
    <property type="evidence" value="ECO:0007669"/>
    <property type="project" value="TreeGrafter"/>
</dbReference>
<dbReference type="CDD" id="cd00320">
    <property type="entry name" value="cpn10"/>
    <property type="match status" value="1"/>
</dbReference>
<dbReference type="FunFam" id="2.30.33.40:FF:000001">
    <property type="entry name" value="10 kDa chaperonin"/>
    <property type="match status" value="1"/>
</dbReference>
<dbReference type="Gene3D" id="2.30.33.40">
    <property type="entry name" value="GroES chaperonin"/>
    <property type="match status" value="1"/>
</dbReference>
<dbReference type="HAMAP" id="MF_00580">
    <property type="entry name" value="CH10"/>
    <property type="match status" value="1"/>
</dbReference>
<dbReference type="InterPro" id="IPR020818">
    <property type="entry name" value="Chaperonin_GroES"/>
</dbReference>
<dbReference type="InterPro" id="IPR037124">
    <property type="entry name" value="Chaperonin_GroES_sf"/>
</dbReference>
<dbReference type="InterPro" id="IPR018369">
    <property type="entry name" value="Chaprnonin_Cpn10_CS"/>
</dbReference>
<dbReference type="InterPro" id="IPR011032">
    <property type="entry name" value="GroES-like_sf"/>
</dbReference>
<dbReference type="NCBIfam" id="NF001527">
    <property type="entry name" value="PRK00364.1-2"/>
    <property type="match status" value="1"/>
</dbReference>
<dbReference type="NCBIfam" id="NF001531">
    <property type="entry name" value="PRK00364.2-2"/>
    <property type="match status" value="1"/>
</dbReference>
<dbReference type="NCBIfam" id="NF001533">
    <property type="entry name" value="PRK00364.2-4"/>
    <property type="match status" value="1"/>
</dbReference>
<dbReference type="PANTHER" id="PTHR10772">
    <property type="entry name" value="10 KDA HEAT SHOCK PROTEIN"/>
    <property type="match status" value="1"/>
</dbReference>
<dbReference type="PANTHER" id="PTHR10772:SF58">
    <property type="entry name" value="CO-CHAPERONIN GROES"/>
    <property type="match status" value="1"/>
</dbReference>
<dbReference type="Pfam" id="PF00166">
    <property type="entry name" value="Cpn10"/>
    <property type="match status" value="1"/>
</dbReference>
<dbReference type="PRINTS" id="PR00297">
    <property type="entry name" value="CHAPERONIN10"/>
</dbReference>
<dbReference type="SMART" id="SM00883">
    <property type="entry name" value="Cpn10"/>
    <property type="match status" value="1"/>
</dbReference>
<dbReference type="SUPFAM" id="SSF50129">
    <property type="entry name" value="GroES-like"/>
    <property type="match status" value="1"/>
</dbReference>
<dbReference type="PROSITE" id="PS00681">
    <property type="entry name" value="CHAPERONINS_CPN10"/>
    <property type="match status" value="1"/>
</dbReference>
<proteinExistence type="inferred from homology"/>
<name>CH10_NEIG1</name>
<comment type="function">
    <text evidence="1">Together with the chaperonin GroEL, plays an essential role in assisting protein folding. The GroEL-GroES system forms a nano-cage that allows encapsulation of the non-native substrate proteins and provides a physical environment optimized to promote and accelerate protein folding. GroES binds to the apical surface of the GroEL ring, thereby capping the opening of the GroEL channel.</text>
</comment>
<comment type="subunit">
    <text evidence="1">Heptamer of 7 subunits arranged in a ring. Interacts with the chaperonin GroEL.</text>
</comment>
<comment type="subcellular location">
    <subcellularLocation>
        <location evidence="1">Cytoplasm</location>
    </subcellularLocation>
</comment>
<comment type="similarity">
    <text evidence="1">Belongs to the GroES chaperonin family.</text>
</comment>